<proteinExistence type="inferred from homology"/>
<keyword id="KW-0131">Cell cycle</keyword>
<keyword id="KW-0132">Cell division</keyword>
<keyword id="KW-0159">Chromosome partition</keyword>
<keyword id="KW-0963">Cytoplasm</keyword>
<keyword id="KW-0226">DNA condensation</keyword>
<keyword id="KW-1185">Reference proteome</keyword>
<gene>
    <name evidence="1" type="primary">mukE</name>
    <name type="ordered locus">PBPRA2377</name>
</gene>
<organism>
    <name type="scientific">Photobacterium profundum (strain SS9)</name>
    <dbReference type="NCBI Taxonomy" id="298386"/>
    <lineage>
        <taxon>Bacteria</taxon>
        <taxon>Pseudomonadati</taxon>
        <taxon>Pseudomonadota</taxon>
        <taxon>Gammaproteobacteria</taxon>
        <taxon>Vibrionales</taxon>
        <taxon>Vibrionaceae</taxon>
        <taxon>Photobacterium</taxon>
    </lineage>
</organism>
<protein>
    <recommendedName>
        <fullName evidence="1">Chromosome partition protein MukE</fullName>
    </recommendedName>
</protein>
<accession>Q6LPL4</accession>
<name>MUKE_PHOPR</name>
<sequence>MPEKLAKAIANPLFPALDNALRSGRHVSSEDLDNHALLIEFERELGMFYRRYNTELIRAPEGFFYLRPRSTSLIGRSVLSEIDMLVGKVLCFLYLSPERLAHEGIFTNQELFDELLVLADEKKLMKFVTHRASGSDLDREKLYDKVKTSLRRLRRIGMLIPIGENGKFRISESVFRFGADVRTGDDVREAQLRLIRDGEAVVHQQEPSQSSLLDGFDADDTGHHDSELTMQEGEV</sequence>
<evidence type="ECO:0000255" key="1">
    <source>
        <dbReference type="HAMAP-Rule" id="MF_01802"/>
    </source>
</evidence>
<evidence type="ECO:0000256" key="2">
    <source>
        <dbReference type="SAM" id="MobiDB-lite"/>
    </source>
</evidence>
<evidence type="ECO:0000305" key="3"/>
<reference key="1">
    <citation type="journal article" date="2005" name="Science">
        <title>Life at depth: Photobacterium profundum genome sequence and expression analysis.</title>
        <authorList>
            <person name="Vezzi A."/>
            <person name="Campanaro S."/>
            <person name="D'Angelo M."/>
            <person name="Simonato F."/>
            <person name="Vitulo N."/>
            <person name="Lauro F.M."/>
            <person name="Cestaro A."/>
            <person name="Malacrida G."/>
            <person name="Simionati B."/>
            <person name="Cannata N."/>
            <person name="Romualdi C."/>
            <person name="Bartlett D.H."/>
            <person name="Valle G."/>
        </authorList>
    </citation>
    <scope>NUCLEOTIDE SEQUENCE [LARGE SCALE GENOMIC DNA]</scope>
    <source>
        <strain>ATCC BAA-1253 / SS9</strain>
    </source>
</reference>
<comment type="function">
    <text evidence="1">Involved in chromosome condensation, segregation and cell cycle progression. May participate in facilitating chromosome segregation by condensation DNA from both sides of a centrally located replisome during cell division. Probably acts via its interaction with MukB and MukF.</text>
</comment>
<comment type="subunit">
    <text evidence="1">Interacts, and probably forms a ternary complex, with MukF and MukB. The complex formation is stimulated by calcium or magnesium.</text>
</comment>
<comment type="subcellular location">
    <subcellularLocation>
        <location evidence="1">Cytoplasm</location>
        <location evidence="1">Nucleoid</location>
    </subcellularLocation>
    <text evidence="1">Restricted to the nucleoid region.</text>
</comment>
<comment type="similarity">
    <text evidence="1">Belongs to the MukE family.</text>
</comment>
<comment type="sequence caution" evidence="3">
    <conflict type="erroneous initiation">
        <sequence resource="EMBL-CDS" id="CAG20762"/>
    </conflict>
</comment>
<dbReference type="EMBL" id="CR378670">
    <property type="protein sequence ID" value="CAG20762.1"/>
    <property type="status" value="ALT_INIT"/>
    <property type="molecule type" value="Genomic_DNA"/>
</dbReference>
<dbReference type="SMR" id="Q6LPL4"/>
<dbReference type="STRING" id="298386.PBPRA2377"/>
<dbReference type="KEGG" id="ppr:PBPRA2377"/>
<dbReference type="eggNOG" id="COG3095">
    <property type="taxonomic scope" value="Bacteria"/>
</dbReference>
<dbReference type="HOGENOM" id="CLU_1146408_0_0_6"/>
<dbReference type="Proteomes" id="UP000000593">
    <property type="component" value="Chromosome 1"/>
</dbReference>
<dbReference type="GO" id="GO:0005737">
    <property type="term" value="C:cytoplasm"/>
    <property type="evidence" value="ECO:0007669"/>
    <property type="project" value="UniProtKB-UniRule"/>
</dbReference>
<dbReference type="GO" id="GO:0009295">
    <property type="term" value="C:nucleoid"/>
    <property type="evidence" value="ECO:0007669"/>
    <property type="project" value="UniProtKB-SubCell"/>
</dbReference>
<dbReference type="GO" id="GO:0051301">
    <property type="term" value="P:cell division"/>
    <property type="evidence" value="ECO:0007669"/>
    <property type="project" value="UniProtKB-KW"/>
</dbReference>
<dbReference type="GO" id="GO:0030261">
    <property type="term" value="P:chromosome condensation"/>
    <property type="evidence" value="ECO:0007669"/>
    <property type="project" value="UniProtKB-KW"/>
</dbReference>
<dbReference type="GO" id="GO:0007059">
    <property type="term" value="P:chromosome segregation"/>
    <property type="evidence" value="ECO:0007669"/>
    <property type="project" value="UniProtKB-UniRule"/>
</dbReference>
<dbReference type="GO" id="GO:0006260">
    <property type="term" value="P:DNA replication"/>
    <property type="evidence" value="ECO:0007669"/>
    <property type="project" value="UniProtKB-UniRule"/>
</dbReference>
<dbReference type="Gene3D" id="1.10.10.2250">
    <property type="match status" value="1"/>
</dbReference>
<dbReference type="Gene3D" id="1.10.10.2260">
    <property type="entry name" value="MukE-like family, C-terminal domain"/>
    <property type="match status" value="1"/>
</dbReference>
<dbReference type="HAMAP" id="MF_01802">
    <property type="entry name" value="MukE"/>
    <property type="match status" value="1"/>
</dbReference>
<dbReference type="InterPro" id="IPR042037">
    <property type="entry name" value="MukE_C"/>
</dbReference>
<dbReference type="InterPro" id="IPR042038">
    <property type="entry name" value="MukE_N"/>
</dbReference>
<dbReference type="InterPro" id="IPR007385">
    <property type="entry name" value="Scp_MukE"/>
</dbReference>
<dbReference type="NCBIfam" id="NF003602">
    <property type="entry name" value="PRK05256.1"/>
    <property type="match status" value="1"/>
</dbReference>
<dbReference type="Pfam" id="PF04288">
    <property type="entry name" value="MukE"/>
    <property type="match status" value="1"/>
</dbReference>
<feature type="chain" id="PRO_0000206800" description="Chromosome partition protein MukE">
    <location>
        <begin position="1"/>
        <end position="235"/>
    </location>
</feature>
<feature type="region of interest" description="Disordered" evidence="2">
    <location>
        <begin position="204"/>
        <end position="235"/>
    </location>
</feature>